<comment type="function">
    <text evidence="3">Involved in the assembly of mitochondrial NADH:ubiquinone oxidoreductase complex (Complex I) at early stages (PubMed:23509070). Interacts with cytosolic Hsp90 to chaperone the Complex I subunit ND-42 in the cytoplasm (PubMed:23509070).</text>
</comment>
<comment type="subunit">
    <text evidence="3 4">Associates with mitochondrial complex I assembly intermediates during its biogenesis (PubMed:34386730). Forms a complex including sicily, ND-42 and Hsp83; the complex is necessary to chaperone ND-42 in the cytoplasm before mitochondrial import; the interaction between sicily and ND-42 is direct and occurs preferably between the unprocessed forms in the cytoplasm; the interaction with Hsp83 is direct (PubMed:23509070). Interacts with ND-30; interaction is stronger between the unprocessed forms in the cytoplasm (PubMed:23509070).</text>
</comment>
<comment type="subcellular location">
    <subcellularLocation>
        <location evidence="3">Mitochondrion inner membrane</location>
    </subcellularLocation>
    <subcellularLocation>
        <location evidence="3">Cytoplasm</location>
        <location evidence="3">Cytosol</location>
    </subcellularLocation>
</comment>
<comment type="tissue specificity">
    <text evidence="3">Expressed in the ventral nerve cord, larval brain, motor neuron axons, imaginal disks, and muscles (at protein level).</text>
</comment>
<comment type="similarity">
    <text evidence="6">Belongs to the NDUFAF6 family.</text>
</comment>
<sequence length="334" mass="38175">MRRLVRNWNCRLLFNAKSGQEIVSHAGIHQEAKTNAIPREKKVIEADKNGYGAKHCMSLVEKYDYENYLCTLLLPRELRRAAFALRAFNVEVSRSVSGHQIEPQIAKMRLKFWHDSIDKCFEPDSQRSYVEDQPVLRELKHTVGSRKLNKVYLRRLVTARERPPTHAFESIRELEEYTEQTFSSLLLLLLEVGGVRDLNADHAASHLGKAQGIATLLRSIPLAGRQQAPCIPLEVLVLHGVSQERIIRSKSDDKGVEDCIFDVASAANTHLKLARQLHDKVPPQVRKIFLSAVATDAYLERLRRANFLLTHKSCVGRDTLLPARLFWKSLLNRF</sequence>
<dbReference type="EMBL" id="AE014298">
    <property type="protein sequence ID" value="AAF48113.1"/>
    <property type="molecule type" value="Genomic_DNA"/>
</dbReference>
<dbReference type="EMBL" id="AE014298">
    <property type="protein sequence ID" value="AHN59612.1"/>
    <property type="molecule type" value="Genomic_DNA"/>
</dbReference>
<dbReference type="EMBL" id="AY119646">
    <property type="protein sequence ID" value="AAM50300.1"/>
    <property type="molecule type" value="mRNA"/>
</dbReference>
<dbReference type="RefSeq" id="NP_001285142.1">
    <property type="nucleotide sequence ID" value="NM_001298213.1"/>
</dbReference>
<dbReference type="RefSeq" id="NP_572765.1">
    <property type="nucleotide sequence ID" value="NM_132537.2"/>
</dbReference>
<dbReference type="SMR" id="Q9VYS5"/>
<dbReference type="BioGRID" id="58556">
    <property type="interactions" value="9"/>
</dbReference>
<dbReference type="FunCoup" id="Q9VYS5">
    <property type="interactions" value="1862"/>
</dbReference>
<dbReference type="STRING" id="7227.FBpp0311993"/>
<dbReference type="PaxDb" id="7227-FBpp0073416"/>
<dbReference type="DNASU" id="32151"/>
<dbReference type="EnsemblMetazoa" id="FBtr0073572">
    <property type="protein sequence ID" value="FBpp0073416"/>
    <property type="gene ID" value="FBgn0030352"/>
</dbReference>
<dbReference type="EnsemblMetazoa" id="FBtr0346165">
    <property type="protein sequence ID" value="FBpp0311993"/>
    <property type="gene ID" value="FBgn0030352"/>
</dbReference>
<dbReference type="GeneID" id="32151"/>
<dbReference type="KEGG" id="dme:Dmel_CG15738"/>
<dbReference type="UCSC" id="CG15738-RA">
    <property type="organism name" value="d. melanogaster"/>
</dbReference>
<dbReference type="AGR" id="FB:FBgn0030352"/>
<dbReference type="CTD" id="32151"/>
<dbReference type="FlyBase" id="FBgn0030352">
    <property type="gene designation" value="sicily"/>
</dbReference>
<dbReference type="VEuPathDB" id="VectorBase:FBgn0030352"/>
<dbReference type="eggNOG" id="KOG4411">
    <property type="taxonomic scope" value="Eukaryota"/>
</dbReference>
<dbReference type="GeneTree" id="ENSGT00510000048688"/>
<dbReference type="HOGENOM" id="CLU_037269_6_0_1"/>
<dbReference type="InParanoid" id="Q9VYS5"/>
<dbReference type="OMA" id="MINAREQ"/>
<dbReference type="OrthoDB" id="270318at2759"/>
<dbReference type="PhylomeDB" id="Q9VYS5"/>
<dbReference type="Reactome" id="R-DME-6799198">
    <property type="pathway name" value="Complex I biogenesis"/>
</dbReference>
<dbReference type="BioGRID-ORCS" id="32151">
    <property type="hits" value="0 hits in 1 CRISPR screen"/>
</dbReference>
<dbReference type="GenomeRNAi" id="32151"/>
<dbReference type="PRO" id="PR:Q9VYS5"/>
<dbReference type="Proteomes" id="UP000000803">
    <property type="component" value="Chromosome X"/>
</dbReference>
<dbReference type="Bgee" id="FBgn0030352">
    <property type="expression patterns" value="Expressed in adult oenocyte (Drosophila) in adult thorax and 59 other cell types or tissues"/>
</dbReference>
<dbReference type="ExpressionAtlas" id="Q9VYS5">
    <property type="expression patterns" value="baseline and differential"/>
</dbReference>
<dbReference type="GO" id="GO:0005737">
    <property type="term" value="C:cytoplasm"/>
    <property type="evidence" value="ECO:0000314"/>
    <property type="project" value="FlyBase"/>
</dbReference>
<dbReference type="GO" id="GO:0005829">
    <property type="term" value="C:cytosol"/>
    <property type="evidence" value="ECO:0007669"/>
    <property type="project" value="UniProtKB-SubCell"/>
</dbReference>
<dbReference type="GO" id="GO:0005743">
    <property type="term" value="C:mitochondrial inner membrane"/>
    <property type="evidence" value="ECO:0007669"/>
    <property type="project" value="UniProtKB-SubCell"/>
</dbReference>
<dbReference type="GO" id="GO:0005739">
    <property type="term" value="C:mitochondrion"/>
    <property type="evidence" value="ECO:0000314"/>
    <property type="project" value="FlyBase"/>
</dbReference>
<dbReference type="GO" id="GO:0009058">
    <property type="term" value="P:biosynthetic process"/>
    <property type="evidence" value="ECO:0007669"/>
    <property type="project" value="InterPro"/>
</dbReference>
<dbReference type="GO" id="GO:0032981">
    <property type="term" value="P:mitochondrial respiratory chain complex I assembly"/>
    <property type="evidence" value="ECO:0000318"/>
    <property type="project" value="GO_Central"/>
</dbReference>
<dbReference type="GO" id="GO:0050821">
    <property type="term" value="P:protein stabilization"/>
    <property type="evidence" value="ECO:0000315"/>
    <property type="project" value="FlyBase"/>
</dbReference>
<dbReference type="FunFam" id="1.10.600.10:FF:000054">
    <property type="entry name" value="NADH dehydrogenase (ubiquinone) complex I, assembly factor 6 homolog"/>
    <property type="match status" value="1"/>
</dbReference>
<dbReference type="Gene3D" id="1.10.600.10">
    <property type="entry name" value="Farnesyl Diphosphate Synthase"/>
    <property type="match status" value="1"/>
</dbReference>
<dbReference type="InterPro" id="IPR008949">
    <property type="entry name" value="Isoprenoid_synthase_dom_sf"/>
</dbReference>
<dbReference type="InterPro" id="IPR002060">
    <property type="entry name" value="Squ/phyt_synthse"/>
</dbReference>
<dbReference type="PANTHER" id="PTHR21181">
    <property type="match status" value="1"/>
</dbReference>
<dbReference type="PANTHER" id="PTHR21181:SF13">
    <property type="entry name" value="NADH DEHYDROGENASE (UBIQUINONE) COMPLEX I, ASSEMBLY FACTOR 6"/>
    <property type="match status" value="1"/>
</dbReference>
<dbReference type="Pfam" id="PF00494">
    <property type="entry name" value="SQS_PSY"/>
    <property type="match status" value="1"/>
</dbReference>
<dbReference type="SUPFAM" id="SSF48576">
    <property type="entry name" value="Terpenoid synthases"/>
    <property type="match status" value="1"/>
</dbReference>
<organism>
    <name type="scientific">Drosophila melanogaster</name>
    <name type="common">Fruit fly</name>
    <dbReference type="NCBI Taxonomy" id="7227"/>
    <lineage>
        <taxon>Eukaryota</taxon>
        <taxon>Metazoa</taxon>
        <taxon>Ecdysozoa</taxon>
        <taxon>Arthropoda</taxon>
        <taxon>Hexapoda</taxon>
        <taxon>Insecta</taxon>
        <taxon>Pterygota</taxon>
        <taxon>Neoptera</taxon>
        <taxon>Endopterygota</taxon>
        <taxon>Diptera</taxon>
        <taxon>Brachycera</taxon>
        <taxon>Muscomorpha</taxon>
        <taxon>Ephydroidea</taxon>
        <taxon>Drosophilidae</taxon>
        <taxon>Drosophila</taxon>
        <taxon>Sophophora</taxon>
    </lineage>
</organism>
<proteinExistence type="evidence at protein level"/>
<evidence type="ECO:0000250" key="1">
    <source>
        <dbReference type="UniProtKB" id="Q330K2"/>
    </source>
</evidence>
<evidence type="ECO:0000255" key="2"/>
<evidence type="ECO:0000269" key="3">
    <source>
    </source>
</evidence>
<evidence type="ECO:0000269" key="4">
    <source>
    </source>
</evidence>
<evidence type="ECO:0000303" key="5">
    <source>
    </source>
</evidence>
<evidence type="ECO:0000305" key="6"/>
<evidence type="ECO:0000312" key="7">
    <source>
        <dbReference type="FlyBase" id="FBgn0030352"/>
    </source>
</evidence>
<reference key="1">
    <citation type="journal article" date="2000" name="Science">
        <title>The genome sequence of Drosophila melanogaster.</title>
        <authorList>
            <person name="Adams M.D."/>
            <person name="Celniker S.E."/>
            <person name="Holt R.A."/>
            <person name="Evans C.A."/>
            <person name="Gocayne J.D."/>
            <person name="Amanatides P.G."/>
            <person name="Scherer S.E."/>
            <person name="Li P.W."/>
            <person name="Hoskins R.A."/>
            <person name="Galle R.F."/>
            <person name="George R.A."/>
            <person name="Lewis S.E."/>
            <person name="Richards S."/>
            <person name="Ashburner M."/>
            <person name="Henderson S.N."/>
            <person name="Sutton G.G."/>
            <person name="Wortman J.R."/>
            <person name="Yandell M.D."/>
            <person name="Zhang Q."/>
            <person name="Chen L.X."/>
            <person name="Brandon R.C."/>
            <person name="Rogers Y.-H.C."/>
            <person name="Blazej R.G."/>
            <person name="Champe M."/>
            <person name="Pfeiffer B.D."/>
            <person name="Wan K.H."/>
            <person name="Doyle C."/>
            <person name="Baxter E.G."/>
            <person name="Helt G."/>
            <person name="Nelson C.R."/>
            <person name="Miklos G.L.G."/>
            <person name="Abril J.F."/>
            <person name="Agbayani A."/>
            <person name="An H.-J."/>
            <person name="Andrews-Pfannkoch C."/>
            <person name="Baldwin D."/>
            <person name="Ballew R.M."/>
            <person name="Basu A."/>
            <person name="Baxendale J."/>
            <person name="Bayraktaroglu L."/>
            <person name="Beasley E.M."/>
            <person name="Beeson K.Y."/>
            <person name="Benos P.V."/>
            <person name="Berman B.P."/>
            <person name="Bhandari D."/>
            <person name="Bolshakov S."/>
            <person name="Borkova D."/>
            <person name="Botchan M.R."/>
            <person name="Bouck J."/>
            <person name="Brokstein P."/>
            <person name="Brottier P."/>
            <person name="Burtis K.C."/>
            <person name="Busam D.A."/>
            <person name="Butler H."/>
            <person name="Cadieu E."/>
            <person name="Center A."/>
            <person name="Chandra I."/>
            <person name="Cherry J.M."/>
            <person name="Cawley S."/>
            <person name="Dahlke C."/>
            <person name="Davenport L.B."/>
            <person name="Davies P."/>
            <person name="de Pablos B."/>
            <person name="Delcher A."/>
            <person name="Deng Z."/>
            <person name="Mays A.D."/>
            <person name="Dew I."/>
            <person name="Dietz S.M."/>
            <person name="Dodson K."/>
            <person name="Doup L.E."/>
            <person name="Downes M."/>
            <person name="Dugan-Rocha S."/>
            <person name="Dunkov B.C."/>
            <person name="Dunn P."/>
            <person name="Durbin K.J."/>
            <person name="Evangelista C.C."/>
            <person name="Ferraz C."/>
            <person name="Ferriera S."/>
            <person name="Fleischmann W."/>
            <person name="Fosler C."/>
            <person name="Gabrielian A.E."/>
            <person name="Garg N.S."/>
            <person name="Gelbart W.M."/>
            <person name="Glasser K."/>
            <person name="Glodek A."/>
            <person name="Gong F."/>
            <person name="Gorrell J.H."/>
            <person name="Gu Z."/>
            <person name="Guan P."/>
            <person name="Harris M."/>
            <person name="Harris N.L."/>
            <person name="Harvey D.A."/>
            <person name="Heiman T.J."/>
            <person name="Hernandez J.R."/>
            <person name="Houck J."/>
            <person name="Hostin D."/>
            <person name="Houston K.A."/>
            <person name="Howland T.J."/>
            <person name="Wei M.-H."/>
            <person name="Ibegwam C."/>
            <person name="Jalali M."/>
            <person name="Kalush F."/>
            <person name="Karpen G.H."/>
            <person name="Ke Z."/>
            <person name="Kennison J.A."/>
            <person name="Ketchum K.A."/>
            <person name="Kimmel B.E."/>
            <person name="Kodira C.D."/>
            <person name="Kraft C.L."/>
            <person name="Kravitz S."/>
            <person name="Kulp D."/>
            <person name="Lai Z."/>
            <person name="Lasko P."/>
            <person name="Lei Y."/>
            <person name="Levitsky A.A."/>
            <person name="Li J.H."/>
            <person name="Li Z."/>
            <person name="Liang Y."/>
            <person name="Lin X."/>
            <person name="Liu X."/>
            <person name="Mattei B."/>
            <person name="McIntosh T.C."/>
            <person name="McLeod M.P."/>
            <person name="McPherson D."/>
            <person name="Merkulov G."/>
            <person name="Milshina N.V."/>
            <person name="Mobarry C."/>
            <person name="Morris J."/>
            <person name="Moshrefi A."/>
            <person name="Mount S.M."/>
            <person name="Moy M."/>
            <person name="Murphy B."/>
            <person name="Murphy L."/>
            <person name="Muzny D.M."/>
            <person name="Nelson D.L."/>
            <person name="Nelson D.R."/>
            <person name="Nelson K.A."/>
            <person name="Nixon K."/>
            <person name="Nusskern D.R."/>
            <person name="Pacleb J.M."/>
            <person name="Palazzolo M."/>
            <person name="Pittman G.S."/>
            <person name="Pan S."/>
            <person name="Pollard J."/>
            <person name="Puri V."/>
            <person name="Reese M.G."/>
            <person name="Reinert K."/>
            <person name="Remington K."/>
            <person name="Saunders R.D.C."/>
            <person name="Scheeler F."/>
            <person name="Shen H."/>
            <person name="Shue B.C."/>
            <person name="Siden-Kiamos I."/>
            <person name="Simpson M."/>
            <person name="Skupski M.P."/>
            <person name="Smith T.J."/>
            <person name="Spier E."/>
            <person name="Spradling A.C."/>
            <person name="Stapleton M."/>
            <person name="Strong R."/>
            <person name="Sun E."/>
            <person name="Svirskas R."/>
            <person name="Tector C."/>
            <person name="Turner R."/>
            <person name="Venter E."/>
            <person name="Wang A.H."/>
            <person name="Wang X."/>
            <person name="Wang Z.-Y."/>
            <person name="Wassarman D.A."/>
            <person name="Weinstock G.M."/>
            <person name="Weissenbach J."/>
            <person name="Williams S.M."/>
            <person name="Woodage T."/>
            <person name="Worley K.C."/>
            <person name="Wu D."/>
            <person name="Yang S."/>
            <person name="Yao Q.A."/>
            <person name="Ye J."/>
            <person name="Yeh R.-F."/>
            <person name="Zaveri J.S."/>
            <person name="Zhan M."/>
            <person name="Zhang G."/>
            <person name="Zhao Q."/>
            <person name="Zheng L."/>
            <person name="Zheng X.H."/>
            <person name="Zhong F.N."/>
            <person name="Zhong W."/>
            <person name="Zhou X."/>
            <person name="Zhu S.C."/>
            <person name="Zhu X."/>
            <person name="Smith H.O."/>
            <person name="Gibbs R.A."/>
            <person name="Myers E.W."/>
            <person name="Rubin G.M."/>
            <person name="Venter J.C."/>
        </authorList>
    </citation>
    <scope>NUCLEOTIDE SEQUENCE [LARGE SCALE GENOMIC DNA]</scope>
    <source>
        <strain>Berkeley</strain>
    </source>
</reference>
<reference key="2">
    <citation type="journal article" date="2002" name="Genome Biol.">
        <title>Annotation of the Drosophila melanogaster euchromatic genome: a systematic review.</title>
        <authorList>
            <person name="Misra S."/>
            <person name="Crosby M.A."/>
            <person name="Mungall C.J."/>
            <person name="Matthews B.B."/>
            <person name="Campbell K.S."/>
            <person name="Hradecky P."/>
            <person name="Huang Y."/>
            <person name="Kaminker J.S."/>
            <person name="Millburn G.H."/>
            <person name="Prochnik S.E."/>
            <person name="Smith C.D."/>
            <person name="Tupy J.L."/>
            <person name="Whitfield E.J."/>
            <person name="Bayraktaroglu L."/>
            <person name="Berman B.P."/>
            <person name="Bettencourt B.R."/>
            <person name="Celniker S.E."/>
            <person name="de Grey A.D.N.J."/>
            <person name="Drysdale R.A."/>
            <person name="Harris N.L."/>
            <person name="Richter J."/>
            <person name="Russo S."/>
            <person name="Schroeder A.J."/>
            <person name="Shu S.Q."/>
            <person name="Stapleton M."/>
            <person name="Yamada C."/>
            <person name="Ashburner M."/>
            <person name="Gelbart W.M."/>
            <person name="Rubin G.M."/>
            <person name="Lewis S.E."/>
        </authorList>
    </citation>
    <scope>GENOME REANNOTATION</scope>
    <source>
        <strain>Berkeley</strain>
    </source>
</reference>
<reference key="3">
    <citation type="journal article" date="2002" name="Genome Biol.">
        <title>A Drosophila full-length cDNA resource.</title>
        <authorList>
            <person name="Stapleton M."/>
            <person name="Carlson J.W."/>
            <person name="Brokstein P."/>
            <person name="Yu C."/>
            <person name="Champe M."/>
            <person name="George R.A."/>
            <person name="Guarin H."/>
            <person name="Kronmiller B."/>
            <person name="Pacleb J.M."/>
            <person name="Park S."/>
            <person name="Wan K.H."/>
            <person name="Rubin G.M."/>
            <person name="Celniker S.E."/>
        </authorList>
    </citation>
    <scope>NUCLEOTIDE SEQUENCE [LARGE SCALE MRNA]</scope>
    <source>
        <strain>Berkeley</strain>
        <tissue>Embryo</tissue>
    </source>
</reference>
<reference key="4">
    <citation type="journal article" date="2013" name="J. Cell Biol.">
        <title>The C8ORF38 homologue Sicily is a cytosolic chaperone for a mitochondrial complex I subunit.</title>
        <authorList>
            <person name="Zhang K."/>
            <person name="Li Z."/>
            <person name="Jaiswal M."/>
            <person name="Bayat V."/>
            <person name="Xiong B."/>
            <person name="Sandoval H."/>
            <person name="Charng W.L."/>
            <person name="David G."/>
            <person name="Haueter C."/>
            <person name="Yamamoto S."/>
            <person name="Graham B.H."/>
            <person name="Bellen H.J."/>
        </authorList>
    </citation>
    <scope>FUNCTION</scope>
    <scope>IDENTIFICATION IN A COMPLEX WITH HSP83 AND ND-42</scope>
    <scope>INTERACTION WITH ND-30</scope>
    <scope>TISSUE SPECIFICITY</scope>
    <scope>MUTAGENESIS OF 1-MET--ARG-11</scope>
</reference>
<reference key="5">
    <citation type="journal article" date="2021" name="IScience">
        <title>Dissecting the concordant and disparate roles of NDUFAF3 and NDUFAF4 in mitochondrial complex I biogenesis.</title>
        <authorList>
            <person name="Murari A."/>
            <person name="Rhooms S.K."/>
            <person name="Garcia C."/>
            <person name="Liu T."/>
            <person name="Li H."/>
            <person name="Mishra B."/>
            <person name="Deshong C."/>
            <person name="Owusu-Ansah E."/>
        </authorList>
    </citation>
    <scope>INTERACTION WITH COMPLEX 1</scope>
</reference>
<accession>Q9VYS5</accession>
<accession>X2JJK8</accession>
<keyword id="KW-0963">Cytoplasm</keyword>
<keyword id="KW-0472">Membrane</keyword>
<keyword id="KW-0496">Mitochondrion</keyword>
<keyword id="KW-0999">Mitochondrion inner membrane</keyword>
<keyword id="KW-1185">Reference proteome</keyword>
<keyword id="KW-0809">Transit peptide</keyword>
<protein>
    <recommendedName>
        <fullName evidence="1">NADH dehydrogenase (ubiquinone) complex I, assembly factor 6 homolog</fullName>
        <shortName evidence="5">dNDUFAF6</shortName>
    </recommendedName>
    <alternativeName>
        <fullName evidence="7">Protein severe impairment of CI with lengthened youth</fullName>
    </alternativeName>
</protein>
<feature type="transit peptide" description="Mitochondrion" evidence="2">
    <location>
        <begin position="1"/>
        <end position="11"/>
    </location>
</feature>
<feature type="chain" id="PRO_0000355147" description="NADH dehydrogenase (ubiquinone) complex I, assembly factor 6 homolog">
    <location>
        <begin position="12"/>
        <end position="334"/>
    </location>
</feature>
<feature type="mutagenesis site" description="Mostly localized to cytoplasm. Does not affect interaction with and protein level stabilization of ND-42." evidence="3">
    <location>
        <begin position="1"/>
        <end position="11"/>
    </location>
</feature>
<name>NDUF6_DROME</name>
<gene>
    <name evidence="7" type="primary">sicily</name>
    <name evidence="7" type="ORF">CG15738</name>
</gene>